<accession>O94533</accession>
<proteinExistence type="inferred from homology"/>
<name>ELP2_SCHPO</name>
<gene>
    <name type="primary">elp2</name>
    <name type="ORF">SPCC895.06</name>
</gene>
<reference key="1">
    <citation type="journal article" date="2002" name="Nature">
        <title>The genome sequence of Schizosaccharomyces pombe.</title>
        <authorList>
            <person name="Wood V."/>
            <person name="Gwilliam R."/>
            <person name="Rajandream M.A."/>
            <person name="Lyne M.H."/>
            <person name="Lyne R."/>
            <person name="Stewart A."/>
            <person name="Sgouros J.G."/>
            <person name="Peat N."/>
            <person name="Hayles J."/>
            <person name="Baker S.G."/>
            <person name="Basham D."/>
            <person name="Bowman S."/>
            <person name="Brooks K."/>
            <person name="Brown D."/>
            <person name="Brown S."/>
            <person name="Chillingworth T."/>
            <person name="Churcher C.M."/>
            <person name="Collins M."/>
            <person name="Connor R."/>
            <person name="Cronin A."/>
            <person name="Davis P."/>
            <person name="Feltwell T."/>
            <person name="Fraser A."/>
            <person name="Gentles S."/>
            <person name="Goble A."/>
            <person name="Hamlin N."/>
            <person name="Harris D.E."/>
            <person name="Hidalgo J."/>
            <person name="Hodgson G."/>
            <person name="Holroyd S."/>
            <person name="Hornsby T."/>
            <person name="Howarth S."/>
            <person name="Huckle E.J."/>
            <person name="Hunt S."/>
            <person name="Jagels K."/>
            <person name="James K.D."/>
            <person name="Jones L."/>
            <person name="Jones M."/>
            <person name="Leather S."/>
            <person name="McDonald S."/>
            <person name="McLean J."/>
            <person name="Mooney P."/>
            <person name="Moule S."/>
            <person name="Mungall K.L."/>
            <person name="Murphy L.D."/>
            <person name="Niblett D."/>
            <person name="Odell C."/>
            <person name="Oliver K."/>
            <person name="O'Neil S."/>
            <person name="Pearson D."/>
            <person name="Quail M.A."/>
            <person name="Rabbinowitsch E."/>
            <person name="Rutherford K.M."/>
            <person name="Rutter S."/>
            <person name="Saunders D."/>
            <person name="Seeger K."/>
            <person name="Sharp S."/>
            <person name="Skelton J."/>
            <person name="Simmonds M.N."/>
            <person name="Squares R."/>
            <person name="Squares S."/>
            <person name="Stevens K."/>
            <person name="Taylor K."/>
            <person name="Taylor R.G."/>
            <person name="Tivey A."/>
            <person name="Walsh S.V."/>
            <person name="Warren T."/>
            <person name="Whitehead S."/>
            <person name="Woodward J.R."/>
            <person name="Volckaert G."/>
            <person name="Aert R."/>
            <person name="Robben J."/>
            <person name="Grymonprez B."/>
            <person name="Weltjens I."/>
            <person name="Vanstreels E."/>
            <person name="Rieger M."/>
            <person name="Schaefer M."/>
            <person name="Mueller-Auer S."/>
            <person name="Gabel C."/>
            <person name="Fuchs M."/>
            <person name="Duesterhoeft A."/>
            <person name="Fritzc C."/>
            <person name="Holzer E."/>
            <person name="Moestl D."/>
            <person name="Hilbert H."/>
            <person name="Borzym K."/>
            <person name="Langer I."/>
            <person name="Beck A."/>
            <person name="Lehrach H."/>
            <person name="Reinhardt R."/>
            <person name="Pohl T.M."/>
            <person name="Eger P."/>
            <person name="Zimmermann W."/>
            <person name="Wedler H."/>
            <person name="Wambutt R."/>
            <person name="Purnelle B."/>
            <person name="Goffeau A."/>
            <person name="Cadieu E."/>
            <person name="Dreano S."/>
            <person name="Gloux S."/>
            <person name="Lelaure V."/>
            <person name="Mottier S."/>
            <person name="Galibert F."/>
            <person name="Aves S.J."/>
            <person name="Xiang Z."/>
            <person name="Hunt C."/>
            <person name="Moore K."/>
            <person name="Hurst S.M."/>
            <person name="Lucas M."/>
            <person name="Rochet M."/>
            <person name="Gaillardin C."/>
            <person name="Tallada V.A."/>
            <person name="Garzon A."/>
            <person name="Thode G."/>
            <person name="Daga R.R."/>
            <person name="Cruzado L."/>
            <person name="Jimenez J."/>
            <person name="Sanchez M."/>
            <person name="del Rey F."/>
            <person name="Benito J."/>
            <person name="Dominguez A."/>
            <person name="Revuelta J.L."/>
            <person name="Moreno S."/>
            <person name="Armstrong J."/>
            <person name="Forsburg S.L."/>
            <person name="Cerutti L."/>
            <person name="Lowe T."/>
            <person name="McCombie W.R."/>
            <person name="Paulsen I."/>
            <person name="Potashkin J."/>
            <person name="Shpakovski G.V."/>
            <person name="Ussery D."/>
            <person name="Barrell B.G."/>
            <person name="Nurse P."/>
        </authorList>
    </citation>
    <scope>NUCLEOTIDE SEQUENCE [LARGE SCALE GENOMIC DNA]</scope>
    <source>
        <strain>972 / ATCC 24843</strain>
    </source>
</reference>
<reference key="2">
    <citation type="journal article" date="2006" name="Nat. Biotechnol.">
        <title>ORFeome cloning and global analysis of protein localization in the fission yeast Schizosaccharomyces pombe.</title>
        <authorList>
            <person name="Matsuyama A."/>
            <person name="Arai R."/>
            <person name="Yashiroda Y."/>
            <person name="Shirai A."/>
            <person name="Kamata A."/>
            <person name="Sekido S."/>
            <person name="Kobayashi Y."/>
            <person name="Hashimoto A."/>
            <person name="Hamamoto M."/>
            <person name="Hiraoka Y."/>
            <person name="Horinouchi S."/>
            <person name="Yoshida M."/>
        </authorList>
    </citation>
    <scope>SUBCELLULAR LOCATION [LARGE SCALE ANALYSIS]</scope>
</reference>
<reference key="3">
    <citation type="journal article" date="2018" name="Cell. Mol. Life Sci.">
        <title>Structural insights into the function of Elongator.</title>
        <authorList>
            <person name="Dalwadi U."/>
            <person name="Yip C.K."/>
        </authorList>
    </citation>
    <scope>REVIEW</scope>
</reference>
<organism>
    <name type="scientific">Schizosaccharomyces pombe (strain 972 / ATCC 24843)</name>
    <name type="common">Fission yeast</name>
    <dbReference type="NCBI Taxonomy" id="284812"/>
    <lineage>
        <taxon>Eukaryota</taxon>
        <taxon>Fungi</taxon>
        <taxon>Dikarya</taxon>
        <taxon>Ascomycota</taxon>
        <taxon>Taphrinomycotina</taxon>
        <taxon>Schizosaccharomycetes</taxon>
        <taxon>Schizosaccharomycetales</taxon>
        <taxon>Schizosaccharomycetaceae</taxon>
        <taxon>Schizosaccharomyces</taxon>
    </lineage>
</organism>
<feature type="chain" id="PRO_0000316551" description="Elongator complex protein 2">
    <location>
        <begin position="1"/>
        <end position="760"/>
    </location>
</feature>
<feature type="repeat" description="WD 1">
    <location>
        <begin position="49"/>
        <end position="93"/>
    </location>
</feature>
<feature type="repeat" description="WD 2">
    <location>
        <begin position="97"/>
        <end position="134"/>
    </location>
</feature>
<feature type="repeat" description="WD 3">
    <location>
        <begin position="139"/>
        <end position="182"/>
    </location>
</feature>
<feature type="repeat" description="WD 4">
    <location>
        <begin position="189"/>
        <end position="231"/>
    </location>
</feature>
<feature type="repeat" description="WD 5">
    <location>
        <begin position="266"/>
        <end position="305"/>
    </location>
</feature>
<feature type="repeat" description="WD 6">
    <location>
        <begin position="324"/>
        <end position="363"/>
    </location>
</feature>
<feature type="repeat" description="WD 7">
    <location>
        <begin position="368"/>
        <end position="407"/>
    </location>
</feature>
<feature type="repeat" description="WD 8">
    <location>
        <begin position="414"/>
        <end position="453"/>
    </location>
</feature>
<feature type="repeat" description="WD 9">
    <location>
        <begin position="576"/>
        <end position="615"/>
    </location>
</feature>
<feature type="repeat" description="WD 10">
    <location>
        <begin position="622"/>
        <end position="663"/>
    </location>
</feature>
<feature type="repeat" description="WD 11">
    <location>
        <begin position="668"/>
        <end position="711"/>
    </location>
</feature>
<feature type="repeat" description="WD 12">
    <location>
        <begin position="721"/>
        <end position="760"/>
    </location>
</feature>
<dbReference type="EMBL" id="CU329672">
    <property type="protein sequence ID" value="CAA22842.1"/>
    <property type="molecule type" value="Genomic_DNA"/>
</dbReference>
<dbReference type="PIR" id="T41644">
    <property type="entry name" value="T41644"/>
</dbReference>
<dbReference type="RefSeq" id="NP_588047.1">
    <property type="nucleotide sequence ID" value="NM_001023039.2"/>
</dbReference>
<dbReference type="SMR" id="O94533"/>
<dbReference type="BioGRID" id="275560">
    <property type="interactions" value="337"/>
</dbReference>
<dbReference type="ComplexPortal" id="CPX-25728">
    <property type="entry name" value="Elongator holoenzyme complex"/>
</dbReference>
<dbReference type="FunCoup" id="O94533">
    <property type="interactions" value="574"/>
</dbReference>
<dbReference type="STRING" id="284812.O94533"/>
<dbReference type="iPTMnet" id="O94533"/>
<dbReference type="PaxDb" id="4896-SPCC895.06.1"/>
<dbReference type="EnsemblFungi" id="SPCC895.06.1">
    <property type="protein sequence ID" value="SPCC895.06.1:pep"/>
    <property type="gene ID" value="SPCC895.06"/>
</dbReference>
<dbReference type="GeneID" id="2538986"/>
<dbReference type="KEGG" id="spo:2538986"/>
<dbReference type="PomBase" id="SPCC895.06">
    <property type="gene designation" value="elp2"/>
</dbReference>
<dbReference type="VEuPathDB" id="FungiDB:SPCC895.06"/>
<dbReference type="eggNOG" id="KOG1063">
    <property type="taxonomic scope" value="Eukaryota"/>
</dbReference>
<dbReference type="HOGENOM" id="CLU_006430_0_0_1"/>
<dbReference type="InParanoid" id="O94533"/>
<dbReference type="OMA" id="ENFRHIS"/>
<dbReference type="PhylomeDB" id="O94533"/>
<dbReference type="UniPathway" id="UPA00988"/>
<dbReference type="PRO" id="PR:O94533"/>
<dbReference type="Proteomes" id="UP000002485">
    <property type="component" value="Chromosome III"/>
</dbReference>
<dbReference type="GO" id="GO:0005829">
    <property type="term" value="C:cytosol"/>
    <property type="evidence" value="ECO:0007005"/>
    <property type="project" value="PomBase"/>
</dbReference>
<dbReference type="GO" id="GO:0033588">
    <property type="term" value="C:elongator holoenzyme complex"/>
    <property type="evidence" value="ECO:0000318"/>
    <property type="project" value="GO_Central"/>
</dbReference>
<dbReference type="GO" id="GO:0005634">
    <property type="term" value="C:nucleus"/>
    <property type="evidence" value="ECO:0007005"/>
    <property type="project" value="PomBase"/>
</dbReference>
<dbReference type="GO" id="GO:0015031">
    <property type="term" value="P:protein transport"/>
    <property type="evidence" value="ECO:0007669"/>
    <property type="project" value="UniProtKB-KW"/>
</dbReference>
<dbReference type="GO" id="GO:0002098">
    <property type="term" value="P:tRNA wobble uridine modification"/>
    <property type="evidence" value="ECO:0000266"/>
    <property type="project" value="PomBase"/>
</dbReference>
<dbReference type="CDD" id="cd00200">
    <property type="entry name" value="WD40"/>
    <property type="match status" value="1"/>
</dbReference>
<dbReference type="FunFam" id="2.130.10.10:FF:002211">
    <property type="entry name" value="Elongator complex protein 2"/>
    <property type="match status" value="1"/>
</dbReference>
<dbReference type="FunFam" id="2.130.10.10:FF:002212">
    <property type="entry name" value="Elongator complex protein 2"/>
    <property type="match status" value="1"/>
</dbReference>
<dbReference type="FunFam" id="2.130.10.10:FF:003175">
    <property type="entry name" value="Elongator complex protein 2"/>
    <property type="match status" value="1"/>
</dbReference>
<dbReference type="Gene3D" id="2.130.10.10">
    <property type="entry name" value="YVTN repeat-like/Quinoprotein amine dehydrogenase"/>
    <property type="match status" value="3"/>
</dbReference>
<dbReference type="InterPro" id="IPR037289">
    <property type="entry name" value="Elp2"/>
</dbReference>
<dbReference type="InterPro" id="IPR020472">
    <property type="entry name" value="G-protein_beta_WD-40_rep"/>
</dbReference>
<dbReference type="InterPro" id="IPR011047">
    <property type="entry name" value="Quinoprotein_ADH-like_sf"/>
</dbReference>
<dbReference type="InterPro" id="IPR015943">
    <property type="entry name" value="WD40/YVTN_repeat-like_dom_sf"/>
</dbReference>
<dbReference type="InterPro" id="IPR019775">
    <property type="entry name" value="WD40_repeat_CS"/>
</dbReference>
<dbReference type="InterPro" id="IPR036322">
    <property type="entry name" value="WD40_repeat_dom_sf"/>
</dbReference>
<dbReference type="InterPro" id="IPR001680">
    <property type="entry name" value="WD40_rpt"/>
</dbReference>
<dbReference type="PANTHER" id="PTHR44111">
    <property type="entry name" value="ELONGATOR COMPLEX PROTEIN 2"/>
    <property type="match status" value="1"/>
</dbReference>
<dbReference type="PANTHER" id="PTHR44111:SF1">
    <property type="entry name" value="ELONGATOR COMPLEX PROTEIN 2"/>
    <property type="match status" value="1"/>
</dbReference>
<dbReference type="Pfam" id="PF00400">
    <property type="entry name" value="WD40"/>
    <property type="match status" value="6"/>
</dbReference>
<dbReference type="PRINTS" id="PR00320">
    <property type="entry name" value="GPROTEINBRPT"/>
</dbReference>
<dbReference type="SMART" id="SM00320">
    <property type="entry name" value="WD40"/>
    <property type="match status" value="10"/>
</dbReference>
<dbReference type="SUPFAM" id="SSF50998">
    <property type="entry name" value="Quinoprotein alcohol dehydrogenase-like"/>
    <property type="match status" value="1"/>
</dbReference>
<dbReference type="SUPFAM" id="SSF50978">
    <property type="entry name" value="WD40 repeat-like"/>
    <property type="match status" value="1"/>
</dbReference>
<dbReference type="PROSITE" id="PS00678">
    <property type="entry name" value="WD_REPEATS_1"/>
    <property type="match status" value="1"/>
</dbReference>
<dbReference type="PROSITE" id="PS50082">
    <property type="entry name" value="WD_REPEATS_2"/>
    <property type="match status" value="5"/>
</dbReference>
<dbReference type="PROSITE" id="PS50294">
    <property type="entry name" value="WD_REPEATS_REGION"/>
    <property type="match status" value="2"/>
</dbReference>
<sequence>MFQYEALHVGCNRIPTAATWSSNLGLIYGAERLIAVADPFKEINYLMAGHSGRINCVCELATNSEYRSPFILSGASDKTLRLWQLEEEYFTCIKTIELEATVNCLCVNENLVVCGCSNSSCIVYSWNAEQRNLTEISRFTCSEIIPLEFAIVKLDHGIILTVCGSSKKIMVYGSDSAISSFKLKAVLRGHLDWVRTLSFKKTSGSTATLASGSQDRYIRLWNISLWGSEDEKVSEEFFESVLSNKPVRFTLGKIDLKIVFDALLMGHEDWVMSVDWHPTKEMILSSSADSSMIVWEPDTNTGIWVVTGRMGEMASSHGSTTATGSAGGFWGGLWNPNGNCVVCWGRTGGWRLWKQDAGQWLQLPSISGHTKSVKGVAWDPEGKFYLSAGTDQTTRLFARFKKDNAWHEMARPQIHGYDLTSISCMPSRIGFLSCADEKVSRVFKFPKTIVRLLYRLCDTNIGEESLPDAANVPLLGLSNKATTASETGTVNAEEVQTPVADVIGSLNHPPFEEHLQRLLLFPEVEKLFGHGYEVYACAISNNGNIAATSCKSQTPEHAVIRLYETQSWNQQQVLKGHSLTVTTIKFSPDDRYILSAGRDRLVCLHEQAENLLDYNNFASIKAHSRIIWDASWAPKEMGYFFATASRDKFVKFWKINDNKKICDVAALQFSDAVTAVDFAPFFHNDELLLAVGTEAGKIFIWRCPRENLTKWYPTRLPDHMAPMESINQILWKPTFETMGLYSLLIAGEDTSVRLLNVTLG</sequence>
<comment type="function">
    <text evidence="4">Component of the elongator complex which is required for multiple tRNA modifications, including mcm5U (5-methoxycarbonylmethyl uridine), mcm5s2U (5-methoxycarbonylmethyl-2-thiouridine), and ncm5U (5-carbamoylmethyl uridine) (PubMed:29332244). The elongator complex catalyzes formation of carboxymethyluridine in the wobble base at position 34 in tRNAs (PubMed:29332244).</text>
</comment>
<comment type="pathway">
    <text evidence="4">tRNA modification; 5-methoxycarbonylmethyl-2-thiouridine-tRNA biosynthesis.</text>
</comment>
<comment type="subunit">
    <text evidence="1">Component of the elongator complex.</text>
</comment>
<comment type="subcellular location">
    <subcellularLocation>
        <location evidence="3">Cytoplasm</location>
    </subcellularLocation>
    <subcellularLocation>
        <location evidence="3">Nucleus</location>
    </subcellularLocation>
</comment>
<comment type="domain">
    <text evidence="1">Folds into a two seven-bladed beta-propeller structure which is required for elongator complex assembly.</text>
</comment>
<comment type="similarity">
    <text evidence="5">Belongs to the WD repeat ELP2 family.</text>
</comment>
<comment type="caution">
    <text evidence="2">The elongator complex was originally thought to play a role in transcription elongation. However, it is no longer thought to play a direct role in this process and its primary function is thought to be in tRNA modification.</text>
</comment>
<evidence type="ECO:0000250" key="1">
    <source>
        <dbReference type="UniProtKB" id="P42935"/>
    </source>
</evidence>
<evidence type="ECO:0000250" key="2">
    <source>
        <dbReference type="UniProtKB" id="Q6IA86"/>
    </source>
</evidence>
<evidence type="ECO:0000269" key="3">
    <source>
    </source>
</evidence>
<evidence type="ECO:0000303" key="4">
    <source>
    </source>
</evidence>
<evidence type="ECO:0000305" key="5"/>
<protein>
    <recommendedName>
        <fullName>Elongator complex protein 2</fullName>
    </recommendedName>
</protein>
<keyword id="KW-0963">Cytoplasm</keyword>
<keyword id="KW-0539">Nucleus</keyword>
<keyword id="KW-0653">Protein transport</keyword>
<keyword id="KW-1185">Reference proteome</keyword>
<keyword id="KW-0677">Repeat</keyword>
<keyword id="KW-0813">Transport</keyword>
<keyword id="KW-0819">tRNA processing</keyword>
<keyword id="KW-0853">WD repeat</keyword>